<protein>
    <recommendedName>
        <fullName>Tape measure protein</fullName>
        <shortName>TMP</shortName>
    </recommendedName>
    <alternativeName>
        <fullName>Gene product 29</fullName>
        <shortName>gp29</shortName>
    </alternativeName>
    <alternativeName>
        <fullName>Tail length regulator</fullName>
    </alternativeName>
</protein>
<gene>
    <name type="primary">29</name>
</gene>
<feature type="chain" id="PRO_0000165017" description="Tape measure protein">
    <location>
        <begin position="1"/>
        <end position="590"/>
    </location>
</feature>
<feature type="region of interest" description="Disordered" evidence="1">
    <location>
        <begin position="1"/>
        <end position="35"/>
    </location>
</feature>
<feature type="region of interest" description="Disordered" evidence="1">
    <location>
        <begin position="147"/>
        <end position="185"/>
    </location>
</feature>
<feature type="region of interest" description="Disordered" evidence="1">
    <location>
        <begin position="515"/>
        <end position="535"/>
    </location>
</feature>
<feature type="compositionally biased region" description="Basic and acidic residues" evidence="1">
    <location>
        <begin position="176"/>
        <end position="185"/>
    </location>
</feature>
<comment type="function">
    <text evidence="3 4">Serves as a base for tail tube protein polymerization and acts as a template for tail length determination.</text>
</comment>
<comment type="subcellular location">
    <subcellularLocation>
        <location evidence="2">Virion</location>
    </subcellularLocation>
</comment>
<reference key="1">
    <citation type="journal article" date="1988" name="Virology">
        <title>The structure of three bacteriophage T4 genes required for tail-tube assembly.</title>
        <authorList>
            <person name="Ishimoto L.K."/>
            <person name="Ishimoto K.S."/>
            <person name="Cascino A."/>
            <person name="Cipollaro M."/>
            <person name="Eiserling F.A."/>
        </authorList>
    </citation>
    <scope>NUCLEOTIDE SEQUENCE [GENOMIC DNA]</scope>
</reference>
<reference key="2">
    <citation type="journal article" date="2003" name="Microbiol. Mol. Biol. Rev.">
        <title>Bacteriophage T4 genome.</title>
        <authorList>
            <person name="Miller E.S."/>
            <person name="Kutter E."/>
            <person name="Mosig G."/>
            <person name="Arisaka F."/>
            <person name="Kunisawa T."/>
            <person name="Ruger W."/>
        </authorList>
    </citation>
    <scope>NUCLEOTIDE SEQUENCE [LARGE SCALE GENOMIC DNA]</scope>
</reference>
<reference key="3">
    <citation type="journal article" date="2004" name="J. Bacteriol.">
        <title>Processing of the tail lysozyme (gp5) of bacteriophage T4.</title>
        <authorList>
            <person name="Ye N."/>
            <person name="Nemoto N."/>
        </authorList>
    </citation>
    <scope>PROTEIN SEQUENCE OF 1-7</scope>
    <scope>SUBCELLULAR LOCATION</scope>
</reference>
<reference key="4">
    <citation type="journal article" date="1994" name="Virology">
        <title>Tail length determination in bacteriophage T4.</title>
        <authorList>
            <person name="Abuladze N.K."/>
            <person name="Gingery M."/>
            <person name="Tsai J."/>
            <person name="Eiserling F.A."/>
        </authorList>
    </citation>
    <scope>FUNCTION</scope>
</reference>
<reference key="5">
    <citation type="journal article" date="2003" name="Cell. Mol. Life Sci.">
        <title>Structure and morphogenesis of bacteriophage T4.</title>
        <authorList>
            <person name="Leiman P.G."/>
            <person name="Kanamaru S."/>
            <person name="Mesyanzhinov V.V."/>
            <person name="Arisaka F."/>
            <person name="Rossmann M.G."/>
        </authorList>
    </citation>
    <scope>REVIEW</scope>
</reference>
<reference key="6">
    <citation type="journal article" date="2010" name="Virol. J.">
        <title>Morphogenesis of the T4 tail and tail fibers.</title>
        <authorList>
            <person name="Leiman P.G."/>
            <person name="Arisaka F."/>
            <person name="van Raaij M.J."/>
            <person name="Kostyuchenko V.A."/>
            <person name="Aksyuk A.A."/>
            <person name="Kanamaru S."/>
            <person name="Rossmann M.G."/>
        </authorList>
    </citation>
    <scope>REVIEW ON FUNCTION</scope>
</reference>
<sequence>MKKPQEMQTMRRKVISDNKPTQEAAKSASNTLSGLNDISTKLDDAQAASELIAQTVEEKSNEIIGAIDNVESAVSDTSAGSELIAETVEIGNNINKEIGESLGSKLDKLTSLLEQKIQTAGIQQTGTSLATVESAIPVKVVEDDTAESVGPLLPAPEAVNNDPDADFFPTPQPVEPKQESPEEKQKKEAFNLKLSQALDKLTKTVDFGFKKSISITDKISSMLFKYTVSAAIEAAKMTAMILAVVVGIDLLMIHFKYWSDKFSKAWDLFSTDFTKFSSETGTWGPLLQSIFDSIDKIKQLWEAGDWGGLTVAIVEGLGKVLFNLGELIQLGMAKLSAAILRVIPGMKDTADEVEGRALENFQNSTGASLNKEDQEKVANYQDKRMNGDLGPIAEGLDKISNWKTRASNWIRGVDNKEALTTDEERAAEEEKLKQLSPEERKNALMKANEARAAMIRFEKYADSADMSKDSTVKSVEAAYEDLKKRMDDPDLNNSPAVKKELAARFSKIDATYQELKKNQPNAKPETSAKSPEAKQVQVIEKNKAQQAPVQQASPSINNTNNVIKKNTVVHNMTPVTSTTAPGVFDATGVN</sequence>
<organismHost>
    <name type="scientific">Escherichia coli</name>
    <dbReference type="NCBI Taxonomy" id="562"/>
</organismHost>
<name>TMP_BPT4</name>
<keyword id="KW-0903">Direct protein sequencing</keyword>
<keyword id="KW-0426">Late protein</keyword>
<keyword id="KW-1185">Reference proteome</keyword>
<keyword id="KW-1188">Viral release from host cell</keyword>
<keyword id="KW-1245">Viral tail assembly</keyword>
<keyword id="KW-0946">Virion</keyword>
<dbReference type="EMBL" id="M20298">
    <property type="protein sequence ID" value="AAA32538.1"/>
    <property type="molecule type" value="Genomic_DNA"/>
</dbReference>
<dbReference type="EMBL" id="AF158101">
    <property type="protein sequence ID" value="AAD42437.1"/>
    <property type="molecule type" value="Genomic_DNA"/>
</dbReference>
<dbReference type="PIR" id="JF0035">
    <property type="entry name" value="GBBPT4"/>
</dbReference>
<dbReference type="RefSeq" id="NP_049805.1">
    <property type="nucleotide sequence ID" value="NC_000866.4"/>
</dbReference>
<dbReference type="SMR" id="P13337"/>
<dbReference type="TCDB" id="1.K.1.1.1">
    <property type="family name" value="the gp27/5 t4-baseplate (t4-bp) family"/>
</dbReference>
<dbReference type="GeneID" id="1258641"/>
<dbReference type="KEGG" id="vg:1258641"/>
<dbReference type="OrthoDB" id="1728at10239"/>
<dbReference type="Proteomes" id="UP000009087">
    <property type="component" value="Segment"/>
</dbReference>
<dbReference type="GO" id="GO:0044423">
    <property type="term" value="C:virion component"/>
    <property type="evidence" value="ECO:0007669"/>
    <property type="project" value="UniProtKB-KW"/>
</dbReference>
<dbReference type="GO" id="GO:0098003">
    <property type="term" value="P:viral tail assembly"/>
    <property type="evidence" value="ECO:0007669"/>
    <property type="project" value="UniProtKB-KW"/>
</dbReference>
<organism>
    <name type="scientific">Enterobacteria phage T4</name>
    <name type="common">Bacteriophage T4</name>
    <dbReference type="NCBI Taxonomy" id="10665"/>
    <lineage>
        <taxon>Viruses</taxon>
        <taxon>Duplodnaviria</taxon>
        <taxon>Heunggongvirae</taxon>
        <taxon>Uroviricota</taxon>
        <taxon>Caudoviricetes</taxon>
        <taxon>Straboviridae</taxon>
        <taxon>Tevenvirinae</taxon>
        <taxon>Tequatrovirus</taxon>
    </lineage>
</organism>
<proteinExistence type="evidence at protein level"/>
<accession>P13337</accession>
<evidence type="ECO:0000256" key="1">
    <source>
        <dbReference type="SAM" id="MobiDB-lite"/>
    </source>
</evidence>
<evidence type="ECO:0000269" key="2">
    <source>
    </source>
</evidence>
<evidence type="ECO:0000269" key="3">
    <source>
    </source>
</evidence>
<evidence type="ECO:0000303" key="4">
    <source>
    </source>
</evidence>